<feature type="chain" id="PRO_0000131365" description="Large ribosomal subunit protein uL18">
    <location>
        <begin position="1"/>
        <end position="123"/>
    </location>
</feature>
<comment type="function">
    <text evidence="1">This is one of the proteins that bind and probably mediate the attachment of the 5S RNA into the large ribosomal subunit, where it forms part of the central protuberance.</text>
</comment>
<comment type="subunit">
    <text evidence="1">Part of the 50S ribosomal subunit; part of the 5S rRNA/L5/L18/L25 subcomplex. Contacts the 5S and 23S rRNAs.</text>
</comment>
<comment type="similarity">
    <text evidence="1">Belongs to the universal ribosomal protein uL18 family.</text>
</comment>
<name>RL18_SYMTH</name>
<sequence>MIKKLDRNKARRKRQLRVRKTVHGTPERPRLNVFRSNQNIYAQIIDDTVGRTLVSASTLDPEVRSRLQGSGGNKAAAAIVGEVVAKRALAAGVTKVVFDRAGYLYHGRVAALAEAAREAGLEF</sequence>
<reference key="1">
    <citation type="journal article" date="2004" name="Nucleic Acids Res.">
        <title>Genome sequence of Symbiobacterium thermophilum, an uncultivable bacterium that depends on microbial commensalism.</title>
        <authorList>
            <person name="Ueda K."/>
            <person name="Yamashita A."/>
            <person name="Ishikawa J."/>
            <person name="Shimada M."/>
            <person name="Watsuji T."/>
            <person name="Morimura K."/>
            <person name="Ikeda H."/>
            <person name="Hattori M."/>
            <person name="Beppu T."/>
        </authorList>
    </citation>
    <scope>NUCLEOTIDE SEQUENCE [LARGE SCALE GENOMIC DNA]</scope>
    <source>
        <strain>DSM 24528 / JCM 14929 / IAM 14863 / T</strain>
    </source>
</reference>
<protein>
    <recommendedName>
        <fullName evidence="1">Large ribosomal subunit protein uL18</fullName>
    </recommendedName>
    <alternativeName>
        <fullName evidence="2">50S ribosomal protein L18</fullName>
    </alternativeName>
</protein>
<dbReference type="EMBL" id="AP006840">
    <property type="protein sequence ID" value="BAD42041.1"/>
    <property type="molecule type" value="Genomic_DNA"/>
</dbReference>
<dbReference type="RefSeq" id="WP_011197174.1">
    <property type="nucleotide sequence ID" value="NC_006177.1"/>
</dbReference>
<dbReference type="SMR" id="Q67JV9"/>
<dbReference type="STRING" id="292459.STH3059"/>
<dbReference type="KEGG" id="sth:STH3059"/>
<dbReference type="eggNOG" id="COG0256">
    <property type="taxonomic scope" value="Bacteria"/>
</dbReference>
<dbReference type="HOGENOM" id="CLU_098841_0_1_9"/>
<dbReference type="OrthoDB" id="9810939at2"/>
<dbReference type="Proteomes" id="UP000000417">
    <property type="component" value="Chromosome"/>
</dbReference>
<dbReference type="GO" id="GO:0022625">
    <property type="term" value="C:cytosolic large ribosomal subunit"/>
    <property type="evidence" value="ECO:0007669"/>
    <property type="project" value="TreeGrafter"/>
</dbReference>
<dbReference type="GO" id="GO:0008097">
    <property type="term" value="F:5S rRNA binding"/>
    <property type="evidence" value="ECO:0007669"/>
    <property type="project" value="TreeGrafter"/>
</dbReference>
<dbReference type="GO" id="GO:0003735">
    <property type="term" value="F:structural constituent of ribosome"/>
    <property type="evidence" value="ECO:0007669"/>
    <property type="project" value="InterPro"/>
</dbReference>
<dbReference type="GO" id="GO:0006412">
    <property type="term" value="P:translation"/>
    <property type="evidence" value="ECO:0007669"/>
    <property type="project" value="UniProtKB-UniRule"/>
</dbReference>
<dbReference type="CDD" id="cd00432">
    <property type="entry name" value="Ribosomal_L18_L5e"/>
    <property type="match status" value="1"/>
</dbReference>
<dbReference type="FunFam" id="3.30.420.100:FF:000001">
    <property type="entry name" value="50S ribosomal protein L18"/>
    <property type="match status" value="1"/>
</dbReference>
<dbReference type="Gene3D" id="3.30.420.100">
    <property type="match status" value="1"/>
</dbReference>
<dbReference type="HAMAP" id="MF_01337_B">
    <property type="entry name" value="Ribosomal_uL18_B"/>
    <property type="match status" value="1"/>
</dbReference>
<dbReference type="InterPro" id="IPR004389">
    <property type="entry name" value="Ribosomal_uL18_bac-type"/>
</dbReference>
<dbReference type="InterPro" id="IPR005484">
    <property type="entry name" value="Ribosomal_uL18_bac/euk"/>
</dbReference>
<dbReference type="NCBIfam" id="TIGR00060">
    <property type="entry name" value="L18_bact"/>
    <property type="match status" value="1"/>
</dbReference>
<dbReference type="PANTHER" id="PTHR12899">
    <property type="entry name" value="39S RIBOSOMAL PROTEIN L18, MITOCHONDRIAL"/>
    <property type="match status" value="1"/>
</dbReference>
<dbReference type="PANTHER" id="PTHR12899:SF3">
    <property type="entry name" value="LARGE RIBOSOMAL SUBUNIT PROTEIN UL18M"/>
    <property type="match status" value="1"/>
</dbReference>
<dbReference type="Pfam" id="PF00861">
    <property type="entry name" value="Ribosomal_L18p"/>
    <property type="match status" value="1"/>
</dbReference>
<dbReference type="SUPFAM" id="SSF53137">
    <property type="entry name" value="Translational machinery components"/>
    <property type="match status" value="1"/>
</dbReference>
<organism>
    <name type="scientific">Symbiobacterium thermophilum (strain DSM 24528 / JCM 14929 / IAM 14863 / T)</name>
    <dbReference type="NCBI Taxonomy" id="292459"/>
    <lineage>
        <taxon>Bacteria</taxon>
        <taxon>Bacillati</taxon>
        <taxon>Bacillota</taxon>
        <taxon>Clostridia</taxon>
        <taxon>Eubacteriales</taxon>
        <taxon>Symbiobacteriaceae</taxon>
        <taxon>Symbiobacterium</taxon>
    </lineage>
</organism>
<proteinExistence type="inferred from homology"/>
<gene>
    <name evidence="1" type="primary">rplR</name>
    <name type="ordered locus">STH3059</name>
</gene>
<keyword id="KW-1185">Reference proteome</keyword>
<keyword id="KW-0687">Ribonucleoprotein</keyword>
<keyword id="KW-0689">Ribosomal protein</keyword>
<keyword id="KW-0694">RNA-binding</keyword>
<keyword id="KW-0699">rRNA-binding</keyword>
<evidence type="ECO:0000255" key="1">
    <source>
        <dbReference type="HAMAP-Rule" id="MF_01337"/>
    </source>
</evidence>
<evidence type="ECO:0000305" key="2"/>
<accession>Q67JV9</accession>